<keyword id="KW-0024">Alternative initiation</keyword>
<keyword id="KW-0167">Capsid protein</keyword>
<keyword id="KW-1176">Cytoplasmic inwards viral transport</keyword>
<keyword id="KW-0238">DNA-binding</keyword>
<keyword id="KW-1035">Host cytoplasm</keyword>
<keyword id="KW-0945">Host-virus interaction</keyword>
<keyword id="KW-1177">Microtubular inwards viral transport</keyword>
<keyword id="KW-0597">Phosphoprotein</keyword>
<keyword id="KW-0677">Repeat</keyword>
<keyword id="KW-0694">RNA-binding</keyword>
<keyword id="KW-1144">T=4 icosahedral capsid protein</keyword>
<keyword id="KW-1163">Viral penetration into host nucleus</keyword>
<keyword id="KW-0946">Virion</keyword>
<keyword id="KW-1160">Virus entry into host cell</keyword>
<protein>
    <recommendedName>
        <fullName evidence="1">Capsid protein</fullName>
    </recommendedName>
    <alternativeName>
        <fullName evidence="1">Core antigen</fullName>
    </alternativeName>
    <alternativeName>
        <fullName evidence="1">Core protein</fullName>
    </alternativeName>
    <alternativeName>
        <fullName evidence="1">HBcAg</fullName>
    </alternativeName>
    <alternativeName>
        <fullName evidence="1">p21.5</fullName>
    </alternativeName>
</protein>
<name>CAPSD_HBVD5</name>
<proteinExistence type="inferred from homology"/>
<reference key="1">
    <citation type="journal article" date="2001" name="J. Gen. Virol.">
        <title>A novel variant genotype C of hepatitis B virus identified in isolates from Australian Aborigines: complete genome sequence and phylogenetic relatedness.</title>
        <authorList>
            <person name="Sugauchi F."/>
            <person name="Mizokami M."/>
            <person name="Orito E."/>
            <person name="Ohno T."/>
            <person name="Kato H."/>
            <person name="Suzuki S."/>
            <person name="Kimura Y."/>
            <person name="Ueda R."/>
            <person name="Butterworth L.A."/>
            <person name="Cooksley W.G."/>
        </authorList>
    </citation>
    <scope>NUCLEOTIDE SEQUENCE [GENOMIC DNA]</scope>
</reference>
<evidence type="ECO:0000255" key="1">
    <source>
        <dbReference type="HAMAP-Rule" id="MF_04076"/>
    </source>
</evidence>
<evidence type="ECO:0000256" key="2">
    <source>
        <dbReference type="SAM" id="MobiDB-lite"/>
    </source>
</evidence>
<comment type="function">
    <text evidence="1">Self assembles to form an icosahedral capsid. Most capsids appear to be large particles with an icosahedral symmetry of T=4 and consist of 240 copies of capsid protein, though a fraction forms smaller T=3 particles consisting of 180 capsid proteins. Entering capsids are transported along microtubules to the nucleus. Phosphorylation of the capsid is thought to induce exposure of nuclear localization signal in the C-terminal portion of the capsid protein that allows binding to the nuclear pore complex via the importin (karyopherin-) alpha and beta. Capsids are imported in intact form through the nuclear pore into the nuclear basket, where it probably binds NUP153. Only capsids that contain the mature viral genome can release the viral DNA and capsid protein into the nucleoplasm. Immature capsids get stuck in the basket. Capsids encapsulate the pre-genomic RNA and the P protein. Pre-genomic RNA is reverse-transcribed into DNA while the capsid is still in the cytoplasm. The capsid can then either be directed to the nucleus, providing more genomes for transcription, or bud through the endoplasmic reticulum to provide new virions.</text>
</comment>
<comment type="subunit">
    <text evidence="1">Homodimerizes, then multimerizes. Interacts with cytosol exposed regions of viral L glycoprotein present in the reticulum-to-Golgi compartment. Interacts with human FLNB. Phosphorylated form interacts with host importin alpha; this interaction depends on the exposure of the NLS, which itself depends upon genome maturation and/or phosphorylation of the capsid protein. Interacts with host NUP153.</text>
</comment>
<comment type="subcellular location">
    <subcellularLocation>
        <location evidence="1">Virion</location>
    </subcellularLocation>
    <subcellularLocation>
        <location evidence="1">Host cytoplasm</location>
    </subcellularLocation>
</comment>
<comment type="alternative products">
    <event type="alternative initiation"/>
    <isoform>
        <id>P0C680-1</id>
        <name>Capsid protein</name>
        <sequence type="displayed"/>
    </isoform>
    <isoform>
        <id>P0C6I1-1</id>
        <name>External core antigen</name>
        <sequence type="external"/>
    </isoform>
</comment>
<comment type="PTM">
    <text evidence="1">Phosphorylated by host SRPK1, SRPK2, and maybe protein kinase C or GAPDH. Phosphorylation is critical for pregenomic RNA packaging. Protein kinase C phosphorylation is stimulated by HBx protein and may play a role in transport of the viral genome to the nucleus at the late step during the viral replication cycle.</text>
</comment>
<comment type="similarity">
    <text evidence="1">Belongs to the orthohepadnavirus core antigen family.</text>
</comment>
<feature type="chain" id="PRO_0000324371" description="Capsid protein">
    <location>
        <begin position="1"/>
        <end position="183"/>
    </location>
</feature>
<feature type="repeat" description="1">
    <location>
        <begin position="162"/>
        <end position="169"/>
    </location>
</feature>
<feature type="repeat" description="2">
    <location>
        <begin position="170"/>
        <end position="177"/>
    </location>
</feature>
<feature type="region of interest" description="Disordered" evidence="2">
    <location>
        <begin position="150"/>
        <end position="183"/>
    </location>
</feature>
<feature type="region of interest" description="2 X 8 AA repeats of S-P-R-R-R-[PR]-S-Q">
    <location>
        <begin position="162"/>
        <end position="177"/>
    </location>
</feature>
<feature type="region of interest" description="RNA binding" evidence="1">
    <location>
        <begin position="177"/>
        <end position="183"/>
    </location>
</feature>
<feature type="short sequence motif" description="Bipartite nuclear localization signal" evidence="1">
    <location>
        <begin position="158"/>
        <end position="175"/>
    </location>
</feature>
<feature type="compositionally biased region" description="Basic residues" evidence="2">
    <location>
        <begin position="151"/>
        <end position="176"/>
    </location>
</feature>
<feature type="modified residue" description="Phosphoserine; by host" evidence="1">
    <location>
        <position position="162"/>
    </location>
</feature>
<feature type="modified residue" description="Phosphoserine; by host" evidence="1">
    <location>
        <position position="170"/>
    </location>
</feature>
<dbReference type="EMBL" id="AB048701">
    <property type="status" value="NOT_ANNOTATED_CDS"/>
    <property type="molecule type" value="Genomic_DNA"/>
</dbReference>
<dbReference type="SMR" id="P0C680"/>
<dbReference type="Proteomes" id="UP000007932">
    <property type="component" value="Genome"/>
</dbReference>
<dbReference type="GO" id="GO:0043657">
    <property type="term" value="C:host cell"/>
    <property type="evidence" value="ECO:0007669"/>
    <property type="project" value="GOC"/>
</dbReference>
<dbReference type="GO" id="GO:0030430">
    <property type="term" value="C:host cell cytoplasm"/>
    <property type="evidence" value="ECO:0007669"/>
    <property type="project" value="UniProtKB-SubCell"/>
</dbReference>
<dbReference type="GO" id="GO:0039619">
    <property type="term" value="C:T=4 icosahedral viral capsid"/>
    <property type="evidence" value="ECO:0007669"/>
    <property type="project" value="UniProtKB-UniRule"/>
</dbReference>
<dbReference type="GO" id="GO:0003677">
    <property type="term" value="F:DNA binding"/>
    <property type="evidence" value="ECO:0007669"/>
    <property type="project" value="UniProtKB-UniRule"/>
</dbReference>
<dbReference type="GO" id="GO:0003723">
    <property type="term" value="F:RNA binding"/>
    <property type="evidence" value="ECO:0007669"/>
    <property type="project" value="UniProtKB-UniRule"/>
</dbReference>
<dbReference type="GO" id="GO:0005198">
    <property type="term" value="F:structural molecule activity"/>
    <property type="evidence" value="ECO:0007669"/>
    <property type="project" value="UniProtKB-UniRule"/>
</dbReference>
<dbReference type="GO" id="GO:0075521">
    <property type="term" value="P:microtubule-dependent intracellular transport of viral material towards nucleus"/>
    <property type="evidence" value="ECO:0007669"/>
    <property type="project" value="UniProtKB-UniRule"/>
</dbReference>
<dbReference type="GO" id="GO:0046718">
    <property type="term" value="P:symbiont entry into host cell"/>
    <property type="evidence" value="ECO:0007669"/>
    <property type="project" value="UniProtKB-UniRule"/>
</dbReference>
<dbReference type="GO" id="GO:0075732">
    <property type="term" value="P:viral penetration into host nucleus"/>
    <property type="evidence" value="ECO:0007669"/>
    <property type="project" value="UniProtKB-UniRule"/>
</dbReference>
<dbReference type="FunFam" id="1.10.4090.10:FF:000001">
    <property type="entry name" value="Capsid protein"/>
    <property type="match status" value="1"/>
</dbReference>
<dbReference type="Gene3D" id="1.10.4090.10">
    <property type="entry name" value="Viral capsid, core domain supefamily, Hepatitis B virus"/>
    <property type="match status" value="1"/>
</dbReference>
<dbReference type="HAMAP" id="MF_04076">
    <property type="entry name" value="HBV_HBEAG"/>
    <property type="match status" value="1"/>
</dbReference>
<dbReference type="InterPro" id="IPR002006">
    <property type="entry name" value="Hepatitis_core"/>
</dbReference>
<dbReference type="InterPro" id="IPR036459">
    <property type="entry name" value="Viral_capsid_core_dom_sf_HBV"/>
</dbReference>
<dbReference type="Pfam" id="PF00906">
    <property type="entry name" value="Hepatitis_core"/>
    <property type="match status" value="2"/>
</dbReference>
<dbReference type="SUPFAM" id="SSF47852">
    <property type="entry name" value="Hepatitis B viral capsid (hbcag)"/>
    <property type="match status" value="1"/>
</dbReference>
<accession>P0C680</accession>
<sequence>MDIDPYKEFGASVELLSFLPSDFFPSVRDLLDTATALYRDALESPEHCTPHHTALRHVCLCWGDLMNLATWVGTNLEDQASRDLVVSYVNTNMGLKFRQLLWFHISCLTFGRDLVLEYLVSFGVWIRTPPAYRPSNAPILSTLPETTVVRQRGRTIRRRTPSPRRRRSQSPRRRRSQSRESQC</sequence>
<organismHost>
    <name type="scientific">Homo sapiens</name>
    <name type="common">Human</name>
    <dbReference type="NCBI Taxonomy" id="9606"/>
</organismHost>
<organismHost>
    <name type="scientific">Pan troglodytes</name>
    <name type="common">Chimpanzee</name>
    <dbReference type="NCBI Taxonomy" id="9598"/>
</organismHost>
<organism>
    <name type="scientific">Hepatitis B virus genotype D subtype ayw (isolate Australia/AustKW/1991)</name>
    <name type="common">HBV-D</name>
    <dbReference type="NCBI Taxonomy" id="489488"/>
    <lineage>
        <taxon>Viruses</taxon>
        <taxon>Riboviria</taxon>
        <taxon>Pararnavirae</taxon>
        <taxon>Artverviricota</taxon>
        <taxon>Revtraviricetes</taxon>
        <taxon>Blubervirales</taxon>
        <taxon>Hepadnaviridae</taxon>
        <taxon>Orthohepadnavirus</taxon>
        <taxon>Hepatitis B virus</taxon>
        <taxon>hepatitis B virus genotype D</taxon>
    </lineage>
</organism>
<gene>
    <name evidence="1" type="primary">C</name>
</gene>